<sequence length="512" mass="58691">MFLVIGAILASALFVGLLLYHLKFKRLIDLISYMPGPPVLPLVGHGHHFIGKPPHEMVKKIFEFMETYSKDQVLKVWLGPELNVLMGNPKDVEVVLGTLRFNDKAGEYKALEPWLKEGLLVSRGRKWHKRRKIITPAFHFKILDQFVEVFEKGSRDLLRNMEQDRLKHGESGFSLYDWINLCTMDTICETAMGVSINAQSNADSEYVQAVKTISMVLHKRMFNILYRFDLTYMLTPLARAEKKALNVLHQFTEKIIVQRREELIREGSSQESSNDDADVGAKRKMAFLDILLQSTVDERPLSNLDIREEVDTFMFEGHDTTSSALMFFFYNIATHPEAQKKCFEEIRSVVGNDKSTPVSYELLNQLHYVDLCVKETLRMYPSVPLLGRKVLEDCEINGKLIPAGTNIGISPLYLGRREELFSEPNSFKPERFDVVTTAEKLNPYAYIPFSAGPRNCIGQKFAMLEIKAIVANVLRHYEVDFVGDSSEPPVLIAELILRTKEPLMFKVRERVY</sequence>
<dbReference type="EC" id="1.14.-.-"/>
<dbReference type="EMBL" id="X67645">
    <property type="protein sequence ID" value="CAA47887.1"/>
    <property type="molecule type" value="mRNA"/>
</dbReference>
<dbReference type="EMBL" id="AF016992">
    <property type="protein sequence ID" value="AAB71155.1"/>
    <property type="molecule type" value="Genomic_DNA"/>
</dbReference>
<dbReference type="EMBL" id="AF016993">
    <property type="protein sequence ID" value="AAB71156.1"/>
    <property type="molecule type" value="Genomic_DNA"/>
</dbReference>
<dbReference type="EMBL" id="AF016994">
    <property type="protein sequence ID" value="AAB71157.1"/>
    <property type="molecule type" value="Genomic_DNA"/>
</dbReference>
<dbReference type="EMBL" id="AF016995">
    <property type="protein sequence ID" value="AAB71158.1"/>
    <property type="molecule type" value="Genomic_DNA"/>
</dbReference>
<dbReference type="EMBL" id="AF016996">
    <property type="protein sequence ID" value="AAB71159.1"/>
    <property type="molecule type" value="Genomic_DNA"/>
</dbReference>
<dbReference type="EMBL" id="AF016997">
    <property type="protein sequence ID" value="AAB71160.1"/>
    <property type="molecule type" value="Genomic_DNA"/>
</dbReference>
<dbReference type="EMBL" id="AF016998">
    <property type="protein sequence ID" value="AAB71161.1"/>
    <property type="molecule type" value="Genomic_DNA"/>
</dbReference>
<dbReference type="EMBL" id="AF016999">
    <property type="protein sequence ID" value="AAB71162.1"/>
    <property type="molecule type" value="Genomic_DNA"/>
</dbReference>
<dbReference type="EMBL" id="AF017000">
    <property type="protein sequence ID" value="AAB71163.1"/>
    <property type="molecule type" value="Genomic_DNA"/>
</dbReference>
<dbReference type="EMBL" id="AF017001">
    <property type="protein sequence ID" value="AAB71164.1"/>
    <property type="molecule type" value="Genomic_DNA"/>
</dbReference>
<dbReference type="EMBL" id="AF017002">
    <property type="protein sequence ID" value="AAB71165.1"/>
    <property type="molecule type" value="Genomic_DNA"/>
</dbReference>
<dbReference type="EMBL" id="AF017003">
    <property type="protein sequence ID" value="AAB71166.1"/>
    <property type="molecule type" value="Genomic_DNA"/>
</dbReference>
<dbReference type="EMBL" id="AF017004">
    <property type="protein sequence ID" value="AAB71167.1"/>
    <property type="molecule type" value="Genomic_DNA"/>
</dbReference>
<dbReference type="EMBL" id="AE014298">
    <property type="protein sequence ID" value="AAF45736.1"/>
    <property type="molecule type" value="Genomic_DNA"/>
</dbReference>
<dbReference type="EMBL" id="AE014298">
    <property type="protein sequence ID" value="AAF45737.1"/>
    <property type="molecule type" value="Genomic_DNA"/>
</dbReference>
<dbReference type="EMBL" id="Z98269">
    <property type="protein sequence ID" value="CAB10972.1"/>
    <property type="molecule type" value="Genomic_DNA"/>
</dbReference>
<dbReference type="PIR" id="S25707">
    <property type="entry name" value="S25707"/>
</dbReference>
<dbReference type="PIR" id="T13611">
    <property type="entry name" value="T13611"/>
</dbReference>
<dbReference type="RefSeq" id="NP_476907.2">
    <property type="nucleotide sequence ID" value="NM_057559.4"/>
</dbReference>
<dbReference type="RefSeq" id="NP_726797.1">
    <property type="nucleotide sequence ID" value="NM_166932.2"/>
</dbReference>
<dbReference type="SMR" id="P33269"/>
<dbReference type="FunCoup" id="P33269">
    <property type="interactions" value="15"/>
</dbReference>
<dbReference type="IntAct" id="P33269">
    <property type="interactions" value="1"/>
</dbReference>
<dbReference type="STRING" id="7227.FBpp0070412"/>
<dbReference type="PaxDb" id="7227-FBpp0070412"/>
<dbReference type="PeptideAtlas" id="P33269"/>
<dbReference type="DNASU" id="31188"/>
<dbReference type="GeneID" id="31188"/>
<dbReference type="KEGG" id="dme:Dmel_CG3656"/>
<dbReference type="AGR" id="FB:FBgn0005670"/>
<dbReference type="CTD" id="31188"/>
<dbReference type="FlyBase" id="FBgn0005670">
    <property type="gene designation" value="Cyp4d1"/>
</dbReference>
<dbReference type="VEuPathDB" id="VectorBase:FBgn0005670"/>
<dbReference type="eggNOG" id="KOG0157">
    <property type="taxonomic scope" value="Eukaryota"/>
</dbReference>
<dbReference type="InParanoid" id="P33269"/>
<dbReference type="OrthoDB" id="1470350at2759"/>
<dbReference type="PhylomeDB" id="P33269"/>
<dbReference type="Reactome" id="R-DME-193144">
    <property type="pathway name" value="Estrogen biosynthesis"/>
</dbReference>
<dbReference type="Reactome" id="R-DME-211976">
    <property type="pathway name" value="Endogenous sterols"/>
</dbReference>
<dbReference type="BioGRID-ORCS" id="31188">
    <property type="hits" value="0 hits in 3 CRISPR screens"/>
</dbReference>
<dbReference type="ChiTaRS" id="Cyp4d1">
    <property type="organism name" value="fly"/>
</dbReference>
<dbReference type="GenomeRNAi" id="31188"/>
<dbReference type="PRO" id="PR:P33269"/>
<dbReference type="Proteomes" id="UP000000803">
    <property type="component" value="Chromosome X"/>
</dbReference>
<dbReference type="ExpressionAtlas" id="P33269">
    <property type="expression patterns" value="baseline and differential"/>
</dbReference>
<dbReference type="GO" id="GO:0005789">
    <property type="term" value="C:endoplasmic reticulum membrane"/>
    <property type="evidence" value="ECO:0007669"/>
    <property type="project" value="UniProtKB-SubCell"/>
</dbReference>
<dbReference type="GO" id="GO:0020037">
    <property type="term" value="F:heme binding"/>
    <property type="evidence" value="ECO:0007669"/>
    <property type="project" value="InterPro"/>
</dbReference>
<dbReference type="GO" id="GO:0005506">
    <property type="term" value="F:iron ion binding"/>
    <property type="evidence" value="ECO:0007669"/>
    <property type="project" value="InterPro"/>
</dbReference>
<dbReference type="GO" id="GO:0004497">
    <property type="term" value="F:monooxygenase activity"/>
    <property type="evidence" value="ECO:0007669"/>
    <property type="project" value="UniProtKB-KW"/>
</dbReference>
<dbReference type="GO" id="GO:0016705">
    <property type="term" value="F:oxidoreductase activity, acting on paired donors, with incorporation or reduction of molecular oxygen"/>
    <property type="evidence" value="ECO:0007669"/>
    <property type="project" value="InterPro"/>
</dbReference>
<dbReference type="CDD" id="cd20628">
    <property type="entry name" value="CYP4"/>
    <property type="match status" value="1"/>
</dbReference>
<dbReference type="FunFam" id="1.10.630.10:FF:000182">
    <property type="entry name" value="Cytochrome P450 3A4"/>
    <property type="match status" value="1"/>
</dbReference>
<dbReference type="Gene3D" id="1.10.630.10">
    <property type="entry name" value="Cytochrome P450"/>
    <property type="match status" value="1"/>
</dbReference>
<dbReference type="InterPro" id="IPR001128">
    <property type="entry name" value="Cyt_P450"/>
</dbReference>
<dbReference type="InterPro" id="IPR017972">
    <property type="entry name" value="Cyt_P450_CS"/>
</dbReference>
<dbReference type="InterPro" id="IPR002401">
    <property type="entry name" value="Cyt_P450_E_grp-I"/>
</dbReference>
<dbReference type="InterPro" id="IPR036396">
    <property type="entry name" value="Cyt_P450_sf"/>
</dbReference>
<dbReference type="InterPro" id="IPR050196">
    <property type="entry name" value="Cytochrome_P450_Monoox"/>
</dbReference>
<dbReference type="PANTHER" id="PTHR24291:SF203">
    <property type="entry name" value="CYTOCHROME P450 4D1-RELATED"/>
    <property type="match status" value="1"/>
</dbReference>
<dbReference type="PANTHER" id="PTHR24291">
    <property type="entry name" value="CYTOCHROME P450 FAMILY 4"/>
    <property type="match status" value="1"/>
</dbReference>
<dbReference type="Pfam" id="PF00067">
    <property type="entry name" value="p450"/>
    <property type="match status" value="1"/>
</dbReference>
<dbReference type="PRINTS" id="PR00463">
    <property type="entry name" value="EP450I"/>
</dbReference>
<dbReference type="PRINTS" id="PR00385">
    <property type="entry name" value="P450"/>
</dbReference>
<dbReference type="SUPFAM" id="SSF48264">
    <property type="entry name" value="Cytochrome P450"/>
    <property type="match status" value="1"/>
</dbReference>
<dbReference type="PROSITE" id="PS00086">
    <property type="entry name" value="CYTOCHROME_P450"/>
    <property type="match status" value="1"/>
</dbReference>
<keyword id="KW-0025">Alternative splicing</keyword>
<keyword id="KW-0256">Endoplasmic reticulum</keyword>
<keyword id="KW-0349">Heme</keyword>
<keyword id="KW-0408">Iron</keyword>
<keyword id="KW-0472">Membrane</keyword>
<keyword id="KW-0479">Metal-binding</keyword>
<keyword id="KW-0492">Microsome</keyword>
<keyword id="KW-0503">Monooxygenase</keyword>
<keyword id="KW-0560">Oxidoreductase</keyword>
<keyword id="KW-1185">Reference proteome</keyword>
<evidence type="ECO:0000250" key="1"/>
<evidence type="ECO:0000269" key="2">
    <source>
    </source>
</evidence>
<evidence type="ECO:0000305" key="3"/>
<protein>
    <recommendedName>
        <fullName>Cytochrome P450 4d1</fullName>
        <ecNumber>1.14.-.-</ecNumber>
    </recommendedName>
    <alternativeName>
        <fullName>CYPIVD1</fullName>
    </alternativeName>
</protein>
<comment type="function">
    <text>Involved in the metabolism of insect hormones and in the breakdown of synthetic insecticides.</text>
</comment>
<comment type="cofactor">
    <cofactor evidence="1">
        <name>heme</name>
        <dbReference type="ChEBI" id="CHEBI:30413"/>
    </cofactor>
</comment>
<comment type="subcellular location">
    <subcellularLocation>
        <location>Endoplasmic reticulum membrane</location>
        <topology>Peripheral membrane protein</topology>
    </subcellularLocation>
    <subcellularLocation>
        <location>Microsome membrane</location>
        <topology>Peripheral membrane protein</topology>
    </subcellularLocation>
</comment>
<comment type="alternative products">
    <event type="alternative splicing"/>
    <isoform>
        <id>P33269-1</id>
        <name>Long</name>
        <sequence type="displayed"/>
    </isoform>
    <isoform>
        <id>P33269-2</id>
        <name>Short</name>
        <sequence type="described" ref="VSP_000614"/>
    </isoform>
</comment>
<comment type="developmental stage">
    <text evidence="2">Expressed throughout development, with the highest levels occurring during late larval stages, then falling drastically during pupariation.</text>
</comment>
<comment type="similarity">
    <text evidence="3">Belongs to the cytochrome P450 family.</text>
</comment>
<accession>P33269</accession>
<accession>O18644</accession>
<accession>O18653</accession>
<accession>O18664</accession>
<accession>Q9W515</accession>
<accession>Q9W516</accession>
<feature type="chain" id="PRO_0000051832" description="Cytochrome P450 4d1">
    <location>
        <begin position="1"/>
        <end position="512"/>
    </location>
</feature>
<feature type="binding site" description="covalent" evidence="1">
    <location>
        <position position="316"/>
    </location>
    <ligand>
        <name>heme</name>
        <dbReference type="ChEBI" id="CHEBI:30413"/>
    </ligand>
</feature>
<feature type="binding site" description="axial binding residue" evidence="1">
    <location>
        <position position="456"/>
    </location>
    <ligand>
        <name>heme</name>
        <dbReference type="ChEBI" id="CHEBI:30413"/>
    </ligand>
    <ligandPart>
        <name>Fe</name>
        <dbReference type="ChEBI" id="CHEBI:18248"/>
    </ligandPart>
</feature>
<feature type="splice variant" id="VSP_000614" description="In isoform Short." evidence="3">
    <original>MFLVIGAILASALFVGLLLYHLKFKRLIDLISYMPGPPVLPLVGHGHHFIGKPPHEMVKKIFEFMETYSKDQVLKVWLGPELNVLMGNPKDVEVVLGTLRFNDKAGEYKALEPWLKEGLLVSRGRKWHKRRKIITPAFHFKILDQFVEVFEKGSRDLLRNMEQDRLKHGESGFSLYDWINLCTMDT</original>
    <variation>MWLLLSLVLLLAIIALEMRRFLRNMRTIPGPLPLPLLGNAHIFLGLTPAEACLKIGELAERHGDTFGLFLGPSYSVMLFNPRDVERVLGSSQLLTKSQEYSFLGRWLNEGLLVSNGRKWHRRRKIITPAFHFRILEPYVEIFDRQSLRLVEELALRISRGQERINLGEAIHLCALDA</variation>
    <location>
        <begin position="1"/>
        <end position="186"/>
    </location>
</feature>
<feature type="sequence variant" description="In strain: CAM-2, CAM-3, CAM-8, CAM-12, CAM-41, CAM-44, CAM-48 and Berkeley.">
    <original>E</original>
    <variation>D</variation>
    <location>
        <position position="170"/>
    </location>
</feature>
<feature type="sequence variant" description="In strain: CAM-8, CAM-44, CAM-48 and Berkeley.">
    <original>S</original>
    <variation>I</variation>
    <location>
        <position position="426"/>
    </location>
</feature>
<feature type="sequence conflict" description="In Ref. 1; CAA47887." evidence="3" ref="1">
    <original>Y</original>
    <variation>I</variation>
    <location>
        <position position="68"/>
    </location>
</feature>
<feature type="sequence conflict" description="In Ref. 1; CAA47887." evidence="3" ref="1">
    <original>E</original>
    <variation>K</variation>
    <location>
        <position position="316"/>
    </location>
</feature>
<feature type="sequence conflict" description="In Ref. 1; CAA47887." evidence="3" ref="1">
    <original>AIVANVLRHYEVDFVGDSSEPPVLIAELILRTKEPLMFKVRE</original>
    <variation>PSWPMCSGTTRLTLWATSFGTTRADRRTYSAYQGPLSSRCG</variation>
    <location>
        <begin position="468"/>
        <end position="509"/>
    </location>
</feature>
<organism>
    <name type="scientific">Drosophila melanogaster</name>
    <name type="common">Fruit fly</name>
    <dbReference type="NCBI Taxonomy" id="7227"/>
    <lineage>
        <taxon>Eukaryota</taxon>
        <taxon>Metazoa</taxon>
        <taxon>Ecdysozoa</taxon>
        <taxon>Arthropoda</taxon>
        <taxon>Hexapoda</taxon>
        <taxon>Insecta</taxon>
        <taxon>Pterygota</taxon>
        <taxon>Neoptera</taxon>
        <taxon>Endopterygota</taxon>
        <taxon>Diptera</taxon>
        <taxon>Brachycera</taxon>
        <taxon>Muscomorpha</taxon>
        <taxon>Ephydroidea</taxon>
        <taxon>Drosophilidae</taxon>
        <taxon>Drosophila</taxon>
        <taxon>Sophophora</taxon>
    </lineage>
</organism>
<name>CP4D1_DROME</name>
<gene>
    <name type="primary">Cyp4d1</name>
    <name type="synonym">CYT-P450-D1</name>
    <name type="ORF">CG3656</name>
</gene>
<reference key="1">
    <citation type="journal article" date="1992" name="DNA Cell Biol.">
        <title>Molecular analysis of a cytochrome P450 gene of family 4 on the Drosophila X chromosome.</title>
        <authorList>
            <person name="Gandhi R."/>
            <person name="Varak E."/>
            <person name="Goldberg M.L."/>
        </authorList>
    </citation>
    <scope>NUCLEOTIDE SEQUENCE [MRNA]</scope>
    <scope>DEVELOPMENTAL STAGE</scope>
    <source>
        <strain>Oregon-R</strain>
        <tissue>Embryo</tissue>
    </source>
</reference>
<reference key="2">
    <citation type="submission" date="1997-10" db="EMBL/GenBank/DDBJ databases">
        <title>Evidence for non-neutral evolution around the cytochrome p450 gene cluster on the Drosophila melanogaster X chromosome.</title>
        <authorList>
            <person name="Phillips K.S."/>
            <person name="Begun D.J."/>
            <person name="Aquadro C.F."/>
        </authorList>
    </citation>
    <scope>NUCLEOTIDE SEQUENCE [GENOMIC DNA]</scope>
    <source>
        <strain>CAM-1</strain>
        <strain>CAM-12</strain>
        <strain>CAM-14</strain>
        <strain>CAM-19</strain>
        <strain>CAM-2</strain>
        <strain>CAM-3</strain>
        <strain>CAM-38</strain>
        <strain>CAM-41</strain>
        <strain>CAM-42</strain>
        <strain>CAM-44</strain>
        <strain>CAM-48</strain>
        <strain>CAM-8</strain>
        <strain>CAM-9</strain>
    </source>
</reference>
<reference key="3">
    <citation type="journal article" date="2000" name="Science">
        <title>The genome sequence of Drosophila melanogaster.</title>
        <authorList>
            <person name="Adams M.D."/>
            <person name="Celniker S.E."/>
            <person name="Holt R.A."/>
            <person name="Evans C.A."/>
            <person name="Gocayne J.D."/>
            <person name="Amanatides P.G."/>
            <person name="Scherer S.E."/>
            <person name="Li P.W."/>
            <person name="Hoskins R.A."/>
            <person name="Galle R.F."/>
            <person name="George R.A."/>
            <person name="Lewis S.E."/>
            <person name="Richards S."/>
            <person name="Ashburner M."/>
            <person name="Henderson S.N."/>
            <person name="Sutton G.G."/>
            <person name="Wortman J.R."/>
            <person name="Yandell M.D."/>
            <person name="Zhang Q."/>
            <person name="Chen L.X."/>
            <person name="Brandon R.C."/>
            <person name="Rogers Y.-H.C."/>
            <person name="Blazej R.G."/>
            <person name="Champe M."/>
            <person name="Pfeiffer B.D."/>
            <person name="Wan K.H."/>
            <person name="Doyle C."/>
            <person name="Baxter E.G."/>
            <person name="Helt G."/>
            <person name="Nelson C.R."/>
            <person name="Miklos G.L.G."/>
            <person name="Abril J.F."/>
            <person name="Agbayani A."/>
            <person name="An H.-J."/>
            <person name="Andrews-Pfannkoch C."/>
            <person name="Baldwin D."/>
            <person name="Ballew R.M."/>
            <person name="Basu A."/>
            <person name="Baxendale J."/>
            <person name="Bayraktaroglu L."/>
            <person name="Beasley E.M."/>
            <person name="Beeson K.Y."/>
            <person name="Benos P.V."/>
            <person name="Berman B.P."/>
            <person name="Bhandari D."/>
            <person name="Bolshakov S."/>
            <person name="Borkova D."/>
            <person name="Botchan M.R."/>
            <person name="Bouck J."/>
            <person name="Brokstein P."/>
            <person name="Brottier P."/>
            <person name="Burtis K.C."/>
            <person name="Busam D.A."/>
            <person name="Butler H."/>
            <person name="Cadieu E."/>
            <person name="Center A."/>
            <person name="Chandra I."/>
            <person name="Cherry J.M."/>
            <person name="Cawley S."/>
            <person name="Dahlke C."/>
            <person name="Davenport L.B."/>
            <person name="Davies P."/>
            <person name="de Pablos B."/>
            <person name="Delcher A."/>
            <person name="Deng Z."/>
            <person name="Mays A.D."/>
            <person name="Dew I."/>
            <person name="Dietz S.M."/>
            <person name="Dodson K."/>
            <person name="Doup L.E."/>
            <person name="Downes M."/>
            <person name="Dugan-Rocha S."/>
            <person name="Dunkov B.C."/>
            <person name="Dunn P."/>
            <person name="Durbin K.J."/>
            <person name="Evangelista C.C."/>
            <person name="Ferraz C."/>
            <person name="Ferriera S."/>
            <person name="Fleischmann W."/>
            <person name="Fosler C."/>
            <person name="Gabrielian A.E."/>
            <person name="Garg N.S."/>
            <person name="Gelbart W.M."/>
            <person name="Glasser K."/>
            <person name="Glodek A."/>
            <person name="Gong F."/>
            <person name="Gorrell J.H."/>
            <person name="Gu Z."/>
            <person name="Guan P."/>
            <person name="Harris M."/>
            <person name="Harris N.L."/>
            <person name="Harvey D.A."/>
            <person name="Heiman T.J."/>
            <person name="Hernandez J.R."/>
            <person name="Houck J."/>
            <person name="Hostin D."/>
            <person name="Houston K.A."/>
            <person name="Howland T.J."/>
            <person name="Wei M.-H."/>
            <person name="Ibegwam C."/>
            <person name="Jalali M."/>
            <person name="Kalush F."/>
            <person name="Karpen G.H."/>
            <person name="Ke Z."/>
            <person name="Kennison J.A."/>
            <person name="Ketchum K.A."/>
            <person name="Kimmel B.E."/>
            <person name="Kodira C.D."/>
            <person name="Kraft C.L."/>
            <person name="Kravitz S."/>
            <person name="Kulp D."/>
            <person name="Lai Z."/>
            <person name="Lasko P."/>
            <person name="Lei Y."/>
            <person name="Levitsky A.A."/>
            <person name="Li J.H."/>
            <person name="Li Z."/>
            <person name="Liang Y."/>
            <person name="Lin X."/>
            <person name="Liu X."/>
            <person name="Mattei B."/>
            <person name="McIntosh T.C."/>
            <person name="McLeod M.P."/>
            <person name="McPherson D."/>
            <person name="Merkulov G."/>
            <person name="Milshina N.V."/>
            <person name="Mobarry C."/>
            <person name="Morris J."/>
            <person name="Moshrefi A."/>
            <person name="Mount S.M."/>
            <person name="Moy M."/>
            <person name="Murphy B."/>
            <person name="Murphy L."/>
            <person name="Muzny D.M."/>
            <person name="Nelson D.L."/>
            <person name="Nelson D.R."/>
            <person name="Nelson K.A."/>
            <person name="Nixon K."/>
            <person name="Nusskern D.R."/>
            <person name="Pacleb J.M."/>
            <person name="Palazzolo M."/>
            <person name="Pittman G.S."/>
            <person name="Pan S."/>
            <person name="Pollard J."/>
            <person name="Puri V."/>
            <person name="Reese M.G."/>
            <person name="Reinert K."/>
            <person name="Remington K."/>
            <person name="Saunders R.D.C."/>
            <person name="Scheeler F."/>
            <person name="Shen H."/>
            <person name="Shue B.C."/>
            <person name="Siden-Kiamos I."/>
            <person name="Simpson M."/>
            <person name="Skupski M.P."/>
            <person name="Smith T.J."/>
            <person name="Spier E."/>
            <person name="Spradling A.C."/>
            <person name="Stapleton M."/>
            <person name="Strong R."/>
            <person name="Sun E."/>
            <person name="Svirskas R."/>
            <person name="Tector C."/>
            <person name="Turner R."/>
            <person name="Venter E."/>
            <person name="Wang A.H."/>
            <person name="Wang X."/>
            <person name="Wang Z.-Y."/>
            <person name="Wassarman D.A."/>
            <person name="Weinstock G.M."/>
            <person name="Weissenbach J."/>
            <person name="Williams S.M."/>
            <person name="Woodage T."/>
            <person name="Worley K.C."/>
            <person name="Wu D."/>
            <person name="Yang S."/>
            <person name="Yao Q.A."/>
            <person name="Ye J."/>
            <person name="Yeh R.-F."/>
            <person name="Zaveri J.S."/>
            <person name="Zhan M."/>
            <person name="Zhang G."/>
            <person name="Zhao Q."/>
            <person name="Zheng L."/>
            <person name="Zheng X.H."/>
            <person name="Zhong F.N."/>
            <person name="Zhong W."/>
            <person name="Zhou X."/>
            <person name="Zhu S.C."/>
            <person name="Zhu X."/>
            <person name="Smith H.O."/>
            <person name="Gibbs R.A."/>
            <person name="Myers E.W."/>
            <person name="Rubin G.M."/>
            <person name="Venter J.C."/>
        </authorList>
    </citation>
    <scope>NUCLEOTIDE SEQUENCE [LARGE SCALE GENOMIC DNA]</scope>
    <source>
        <strain>Berkeley</strain>
    </source>
</reference>
<reference key="4">
    <citation type="journal article" date="2002" name="Genome Biol.">
        <title>Annotation of the Drosophila melanogaster euchromatic genome: a systematic review.</title>
        <authorList>
            <person name="Misra S."/>
            <person name="Crosby M.A."/>
            <person name="Mungall C.J."/>
            <person name="Matthews B.B."/>
            <person name="Campbell K.S."/>
            <person name="Hradecky P."/>
            <person name="Huang Y."/>
            <person name="Kaminker J.S."/>
            <person name="Millburn G.H."/>
            <person name="Prochnik S.E."/>
            <person name="Smith C.D."/>
            <person name="Tupy J.L."/>
            <person name="Whitfield E.J."/>
            <person name="Bayraktaroglu L."/>
            <person name="Berman B.P."/>
            <person name="Bettencourt B.R."/>
            <person name="Celniker S.E."/>
            <person name="de Grey A.D.N.J."/>
            <person name="Drysdale R.A."/>
            <person name="Harris N.L."/>
            <person name="Richter J."/>
            <person name="Russo S."/>
            <person name="Schroeder A.J."/>
            <person name="Shu S.Q."/>
            <person name="Stapleton M."/>
            <person name="Yamada C."/>
            <person name="Ashburner M."/>
            <person name="Gelbart W.M."/>
            <person name="Rubin G.M."/>
            <person name="Lewis S.E."/>
        </authorList>
    </citation>
    <scope>GENOME REANNOTATION</scope>
    <scope>ALTERNATIVE SPLICING</scope>
    <source>
        <strain>Berkeley</strain>
    </source>
</reference>
<reference key="5">
    <citation type="journal article" date="2000" name="Science">
        <title>From sequence to chromosome: the tip of the X chromosome of D. melanogaster.</title>
        <authorList>
            <person name="Benos P.V."/>
            <person name="Gatt M.K."/>
            <person name="Ashburner M."/>
            <person name="Murphy L."/>
            <person name="Harris D."/>
            <person name="Barrell B.G."/>
            <person name="Ferraz C."/>
            <person name="Vidal S."/>
            <person name="Brun C."/>
            <person name="Demailles J."/>
            <person name="Cadieu E."/>
            <person name="Dreano S."/>
            <person name="Gloux S."/>
            <person name="Lelaure V."/>
            <person name="Mottier S."/>
            <person name="Galibert F."/>
            <person name="Borkova D."/>
            <person name="Minana B."/>
            <person name="Kafatos F.C."/>
            <person name="Louis C."/>
            <person name="Siden-Kiamos I."/>
            <person name="Bolshakov S."/>
            <person name="Papagiannakis G."/>
            <person name="Spanos L."/>
            <person name="Cox S."/>
            <person name="Madueno E."/>
            <person name="de Pablos B."/>
            <person name="Modolell J."/>
            <person name="Peter A."/>
            <person name="Schoettler P."/>
            <person name="Werner M."/>
            <person name="Mourkioti F."/>
            <person name="Beinert N."/>
            <person name="Dowe G."/>
            <person name="Schaefer U."/>
            <person name="Jaeckle H."/>
            <person name="Bucheton A."/>
            <person name="Callister D.M."/>
            <person name="Campbell L.A."/>
            <person name="Darlamitsou A."/>
            <person name="Henderson N.S."/>
            <person name="McMillan P.J."/>
            <person name="Salles C."/>
            <person name="Tait E.A."/>
            <person name="Valenti P."/>
            <person name="Saunders R.D.C."/>
            <person name="Glover D.M."/>
        </authorList>
    </citation>
    <scope>NUCLEOTIDE SEQUENCE [LARGE SCALE GENOMIC DNA]</scope>
    <source>
        <strain>Oregon-R</strain>
    </source>
</reference>
<proteinExistence type="evidence at transcript level"/>